<reference key="1">
    <citation type="journal article" date="1999" name="Dev. Biol.">
        <title>HRT1, HRT2 and HRT3: a new subclass of bHLH transcription factors marking specific cardiac, somitic and pharyngeal arch segments.</title>
        <authorList>
            <person name="Nakagawa O."/>
            <person name="Nakagawa M."/>
            <person name="Richardson J.A."/>
            <person name="Olson E.N."/>
            <person name="Srivastava D."/>
        </authorList>
    </citation>
    <scope>NUCLEOTIDE SEQUENCE [MRNA]</scope>
    <scope>TISSUE SPECIFICITY</scope>
    <scope>DEVELOPMENTAL STAGE</scope>
</reference>
<reference key="2">
    <citation type="journal article" date="2000" name="Genomics">
        <title>Characterization of the human and mouse HEY1, HEY2, and HEYL genes: cloning, mapping, and mutation screening of a new bHLH gene family.</title>
        <authorList>
            <person name="Steidl C."/>
            <person name="Leimeister C."/>
            <person name="Klamt B."/>
            <person name="Maier M."/>
            <person name="Nanda I."/>
            <person name="Dixon M."/>
            <person name="Clarke R."/>
            <person name="Schmid M."/>
            <person name="Gessler M."/>
        </authorList>
    </citation>
    <scope>NUCLEOTIDE SEQUENCE [MRNA]</scope>
    <scope>TISSUE SPECIFICITY</scope>
    <scope>DEVELOPMENTAL STAGE</scope>
</reference>
<reference key="3">
    <citation type="journal article" date="2000" name="J. Biol. Chem.">
        <title>Cardiovascular basic helix loop helix factor 1, a novel transcriptional repressor expressed preferentially in the developing and adult cardiovascular system.</title>
        <authorList>
            <person name="Chin M.T."/>
            <person name="Maemura K."/>
            <person name="Fukumoto S."/>
            <person name="Jain M.K."/>
            <person name="Layne M.D."/>
            <person name="Watanabe M."/>
            <person name="Hsieh C.-M."/>
            <person name="Lee M.-E."/>
        </authorList>
    </citation>
    <scope>NUCLEOTIDE SEQUENCE [MRNA]</scope>
    <scope>FUNCTION</scope>
    <scope>TISSUE SPECIFICITY</scope>
    <scope>DEVELOPMENTAL STAGE</scope>
</reference>
<reference key="4">
    <citation type="journal article" date="2001" name="Mol. Cell. Biol.">
        <title>HERP, a new primary target of Notch regulated by ligand binding.</title>
        <authorList>
            <person name="Iso T."/>
            <person name="Sartorelli V."/>
            <person name="Chung G."/>
            <person name="Shichinohe T."/>
            <person name="Kedes L."/>
            <person name="Hamamori Y."/>
        </authorList>
    </citation>
    <scope>NUCLEOTIDE SEQUENCE [MRNA]</scope>
</reference>
<reference key="5">
    <citation type="submission" date="2002-10" db="EMBL/GenBank/DDBJ databases">
        <title>Cloning of hesr2 gene.</title>
        <authorList>
            <person name="Kokubo H."/>
            <person name="Johnson R.L."/>
        </authorList>
    </citation>
    <scope>NUCLEOTIDE SEQUENCE [MRNA]</scope>
</reference>
<reference key="6">
    <citation type="journal article" date="2005" name="Science">
        <title>The transcriptional landscape of the mammalian genome.</title>
        <authorList>
            <person name="Carninci P."/>
            <person name="Kasukawa T."/>
            <person name="Katayama S."/>
            <person name="Gough J."/>
            <person name="Frith M.C."/>
            <person name="Maeda N."/>
            <person name="Oyama R."/>
            <person name="Ravasi T."/>
            <person name="Lenhard B."/>
            <person name="Wells C."/>
            <person name="Kodzius R."/>
            <person name="Shimokawa K."/>
            <person name="Bajic V.B."/>
            <person name="Brenner S.E."/>
            <person name="Batalov S."/>
            <person name="Forrest A.R."/>
            <person name="Zavolan M."/>
            <person name="Davis M.J."/>
            <person name="Wilming L.G."/>
            <person name="Aidinis V."/>
            <person name="Allen J.E."/>
            <person name="Ambesi-Impiombato A."/>
            <person name="Apweiler R."/>
            <person name="Aturaliya R.N."/>
            <person name="Bailey T.L."/>
            <person name="Bansal M."/>
            <person name="Baxter L."/>
            <person name="Beisel K.W."/>
            <person name="Bersano T."/>
            <person name="Bono H."/>
            <person name="Chalk A.M."/>
            <person name="Chiu K.P."/>
            <person name="Choudhary V."/>
            <person name="Christoffels A."/>
            <person name="Clutterbuck D.R."/>
            <person name="Crowe M.L."/>
            <person name="Dalla E."/>
            <person name="Dalrymple B.P."/>
            <person name="de Bono B."/>
            <person name="Della Gatta G."/>
            <person name="di Bernardo D."/>
            <person name="Down T."/>
            <person name="Engstrom P."/>
            <person name="Fagiolini M."/>
            <person name="Faulkner G."/>
            <person name="Fletcher C.F."/>
            <person name="Fukushima T."/>
            <person name="Furuno M."/>
            <person name="Futaki S."/>
            <person name="Gariboldi M."/>
            <person name="Georgii-Hemming P."/>
            <person name="Gingeras T.R."/>
            <person name="Gojobori T."/>
            <person name="Green R.E."/>
            <person name="Gustincich S."/>
            <person name="Harbers M."/>
            <person name="Hayashi Y."/>
            <person name="Hensch T.K."/>
            <person name="Hirokawa N."/>
            <person name="Hill D."/>
            <person name="Huminiecki L."/>
            <person name="Iacono M."/>
            <person name="Ikeo K."/>
            <person name="Iwama A."/>
            <person name="Ishikawa T."/>
            <person name="Jakt M."/>
            <person name="Kanapin A."/>
            <person name="Katoh M."/>
            <person name="Kawasawa Y."/>
            <person name="Kelso J."/>
            <person name="Kitamura H."/>
            <person name="Kitano H."/>
            <person name="Kollias G."/>
            <person name="Krishnan S.P."/>
            <person name="Kruger A."/>
            <person name="Kummerfeld S.K."/>
            <person name="Kurochkin I.V."/>
            <person name="Lareau L.F."/>
            <person name="Lazarevic D."/>
            <person name="Lipovich L."/>
            <person name="Liu J."/>
            <person name="Liuni S."/>
            <person name="McWilliam S."/>
            <person name="Madan Babu M."/>
            <person name="Madera M."/>
            <person name="Marchionni L."/>
            <person name="Matsuda H."/>
            <person name="Matsuzawa S."/>
            <person name="Miki H."/>
            <person name="Mignone F."/>
            <person name="Miyake S."/>
            <person name="Morris K."/>
            <person name="Mottagui-Tabar S."/>
            <person name="Mulder N."/>
            <person name="Nakano N."/>
            <person name="Nakauchi H."/>
            <person name="Ng P."/>
            <person name="Nilsson R."/>
            <person name="Nishiguchi S."/>
            <person name="Nishikawa S."/>
            <person name="Nori F."/>
            <person name="Ohara O."/>
            <person name="Okazaki Y."/>
            <person name="Orlando V."/>
            <person name="Pang K.C."/>
            <person name="Pavan W.J."/>
            <person name="Pavesi G."/>
            <person name="Pesole G."/>
            <person name="Petrovsky N."/>
            <person name="Piazza S."/>
            <person name="Reed J."/>
            <person name="Reid J.F."/>
            <person name="Ring B.Z."/>
            <person name="Ringwald M."/>
            <person name="Rost B."/>
            <person name="Ruan Y."/>
            <person name="Salzberg S.L."/>
            <person name="Sandelin A."/>
            <person name="Schneider C."/>
            <person name="Schoenbach C."/>
            <person name="Sekiguchi K."/>
            <person name="Semple C.A."/>
            <person name="Seno S."/>
            <person name="Sessa L."/>
            <person name="Sheng Y."/>
            <person name="Shibata Y."/>
            <person name="Shimada H."/>
            <person name="Shimada K."/>
            <person name="Silva D."/>
            <person name="Sinclair B."/>
            <person name="Sperling S."/>
            <person name="Stupka E."/>
            <person name="Sugiura K."/>
            <person name="Sultana R."/>
            <person name="Takenaka Y."/>
            <person name="Taki K."/>
            <person name="Tammoja K."/>
            <person name="Tan S.L."/>
            <person name="Tang S."/>
            <person name="Taylor M.S."/>
            <person name="Tegner J."/>
            <person name="Teichmann S.A."/>
            <person name="Ueda H.R."/>
            <person name="van Nimwegen E."/>
            <person name="Verardo R."/>
            <person name="Wei C.L."/>
            <person name="Yagi K."/>
            <person name="Yamanishi H."/>
            <person name="Zabarovsky E."/>
            <person name="Zhu S."/>
            <person name="Zimmer A."/>
            <person name="Hide W."/>
            <person name="Bult C."/>
            <person name="Grimmond S.M."/>
            <person name="Teasdale R.D."/>
            <person name="Liu E.T."/>
            <person name="Brusic V."/>
            <person name="Quackenbush J."/>
            <person name="Wahlestedt C."/>
            <person name="Mattick J.S."/>
            <person name="Hume D.A."/>
            <person name="Kai C."/>
            <person name="Sasaki D."/>
            <person name="Tomaru Y."/>
            <person name="Fukuda S."/>
            <person name="Kanamori-Katayama M."/>
            <person name="Suzuki M."/>
            <person name="Aoki J."/>
            <person name="Arakawa T."/>
            <person name="Iida J."/>
            <person name="Imamura K."/>
            <person name="Itoh M."/>
            <person name="Kato T."/>
            <person name="Kawaji H."/>
            <person name="Kawagashira N."/>
            <person name="Kawashima T."/>
            <person name="Kojima M."/>
            <person name="Kondo S."/>
            <person name="Konno H."/>
            <person name="Nakano K."/>
            <person name="Ninomiya N."/>
            <person name="Nishio T."/>
            <person name="Okada M."/>
            <person name="Plessy C."/>
            <person name="Shibata K."/>
            <person name="Shiraki T."/>
            <person name="Suzuki S."/>
            <person name="Tagami M."/>
            <person name="Waki K."/>
            <person name="Watahiki A."/>
            <person name="Okamura-Oho Y."/>
            <person name="Suzuki H."/>
            <person name="Kawai J."/>
            <person name="Hayashizaki Y."/>
        </authorList>
    </citation>
    <scope>NUCLEOTIDE SEQUENCE [LARGE SCALE MRNA]</scope>
    <source>
        <strain>C57BL/6J</strain>
        <tissue>Inner ear</tissue>
        <tissue>Testis</tissue>
    </source>
</reference>
<reference key="7">
    <citation type="journal article" date="2004" name="Genome Res.">
        <title>The status, quality, and expansion of the NIH full-length cDNA project: the Mammalian Gene Collection (MGC).</title>
        <authorList>
            <consortium name="The MGC Project Team"/>
        </authorList>
    </citation>
    <scope>NUCLEOTIDE SEQUENCE [MRNA]</scope>
</reference>
<reference key="8">
    <citation type="journal article" date="1999" name="Mech. Dev.">
        <title>Hey genes: a novel subfamily of hairy- and enhancer of split related genes specifically expressed during mouse embryogenesis.</title>
        <authorList>
            <person name="Leimeister C."/>
            <person name="Externbrinck A."/>
            <person name="Klamt B."/>
            <person name="Gessler M."/>
        </authorList>
    </citation>
    <scope>DEVELOPMENTAL STAGE</scope>
</reference>
<reference key="9">
    <citation type="journal article" date="2000" name="Biochem. Biophys. Res. Commun.">
        <title>Comparative analysis of the human and mouse Hey1 promoter: Hey genes are new Notch target genes.</title>
        <authorList>
            <person name="Maier M.M."/>
            <person name="Gessler M."/>
        </authorList>
    </citation>
    <scope>INDUCTION</scope>
</reference>
<reference key="10">
    <citation type="journal article" date="2000" name="Proc. Natl. Acad. Sci. U.S.A.">
        <title>Members of the HRT family of basic helix-loop-helix proteins act as transcriptional repressors downstream of Notch signaling.</title>
        <authorList>
            <person name="Nakagawa O."/>
            <person name="McFadden D.G."/>
            <person name="Nakagawa M."/>
            <person name="Yanagisawa H."/>
            <person name="Hu T."/>
            <person name="Srivastava D."/>
            <person name="Olson E.N."/>
        </authorList>
    </citation>
    <scope>FUNCTION</scope>
    <scope>DNA-BINDING</scope>
    <scope>INDUCTION</scope>
    <scope>MUTAGENESIS OF 49-ARG--ARG-61</scope>
</reference>
<reference key="11">
    <citation type="journal article" date="2001" name="J. Neurosci.">
        <title>The basic helix-loop-helix gene hesr2 promotes gliogenesis in mouse retina.</title>
        <authorList>
            <person name="Satow T."/>
            <person name="Bae S.-K."/>
            <person name="Inoue T."/>
            <person name="Inoue C."/>
            <person name="Miyoshi G."/>
            <person name="Tomita K."/>
            <person name="Bessho Y."/>
            <person name="Hashimoto N."/>
            <person name="Kageyama R."/>
        </authorList>
    </citation>
    <scope>FUNCTION</scope>
    <scope>DEVELOPMENTAL STAGE</scope>
</reference>
<reference key="12">
    <citation type="journal article" date="2001" name="Mol. Cell. Biol.">
        <title>HERP, a novel heterodimer partner of HES/E(spl) in Notch signaling.</title>
        <authorList>
            <person name="Iso T."/>
            <person name="Sartorelli V."/>
            <person name="Poizat C."/>
            <person name="Iezzi S."/>
            <person name="Wu H.-Y."/>
            <person name="Chung G."/>
            <person name="Kedes L."/>
            <person name="Hamamori Y."/>
        </authorList>
    </citation>
    <scope>FUNCTION</scope>
    <scope>DNA-BINDING</scope>
    <scope>INTERACTION WITH HDAC1; HES1; NCOR1 AND SIN3A</scope>
</reference>
<reference key="13">
    <citation type="journal article" date="2002" name="Curr. Biol.">
        <title>Mouse gridlock: no aortic coarctation or deficiency, but fatal cardiac defects in Hey2 -/- mice.</title>
        <authorList>
            <person name="Gessler M."/>
            <person name="Knobeloch K.-P."/>
            <person name="Helisch A."/>
            <person name="Amann K."/>
            <person name="Schumacher N."/>
            <person name="Rohde E."/>
            <person name="Fischer A."/>
            <person name="Leimeister C."/>
        </authorList>
    </citation>
    <scope>FUNCTION</scope>
    <scope>DISRUPTION PHENOTYPE</scope>
</reference>
<reference key="14">
    <citation type="journal article" date="2002" name="Curr. Biol.">
        <title>Tetralogy of fallot and other congenital heart defects in Hey2 mutant mice.</title>
        <authorList>
            <person name="Donovan J."/>
            <person name="Kordylewska A."/>
            <person name="Jan Y.N."/>
            <person name="Utset M.F."/>
        </authorList>
    </citation>
    <scope>FUNCTION</scope>
    <scope>DISRUPTION PHENOTYPE</scope>
</reference>
<reference key="15">
    <citation type="journal article" date="2002" name="J. Biol. Chem.">
        <title>HERP1 is a cell type-specific primary target of Notch.</title>
        <authorList>
            <person name="Iso T."/>
            <person name="Chung G."/>
            <person name="Hamamori Y."/>
            <person name="Kedes L."/>
        </authorList>
    </citation>
    <scope>INDUCTION</scope>
    <scope>SUBCELLULAR LOCATION</scope>
</reference>
<reference key="16">
    <citation type="journal article" date="2002" name="Proc. Natl. Acad. Sci. U.S.A.">
        <title>Ventricular septal defect and cardiomyopathy in mice lacking the transcription factor CHF1/Hey2.</title>
        <authorList>
            <person name="Sakata Y."/>
            <person name="Kamei C.N."/>
            <person name="Nakagami H."/>
            <person name="Bronson R."/>
            <person name="Liao J.K."/>
            <person name="Chin M.T."/>
        </authorList>
    </citation>
    <scope>FUNCTION</scope>
    <scope>DISRUPTION PHENOTYPE</scope>
</reference>
<reference key="17">
    <citation type="journal article" date="2003" name="J. Biol. Chem.">
        <title>The basic helix-loop-helix genes Hesr1/Hey1 and Hesr2/Hey2 regulate maintenance of neural precursor cells in the brain.</title>
        <authorList>
            <person name="Sakamoto M."/>
            <person name="Hirata H."/>
            <person name="Ohtsuka T."/>
            <person name="Bessho Y."/>
            <person name="Kageyama R."/>
        </authorList>
    </citation>
    <scope>FUNCTION</scope>
    <scope>TISSUE SPECIFICITY</scope>
    <scope>DEVELOPMENTAL STAGE</scope>
</reference>
<reference key="18">
    <citation type="journal article" date="2004" name="Arterioscler. Thromb. Vasc. Biol.">
        <title>Transcription factor CHF1/Hey2 regulates neointimal formation in vivo and vascular smooth muscle proliferation and migration in vitro.</title>
        <authorList>
            <person name="Sakata Y."/>
            <person name="Xiang F."/>
            <person name="Chen Z."/>
            <person name="Kiriyama Y."/>
            <person name="Kamei C.N."/>
            <person name="Simon D.I."/>
            <person name="Chin M.T."/>
        </authorList>
    </citation>
    <scope>FUNCTION</scope>
</reference>
<reference key="19">
    <citation type="journal article" date="2004" name="Circ. Res.">
        <title>Targeted disruption of hesr2 results in atrioventricular valve anomalies that lead to heart dysfunction.</title>
        <authorList>
            <person name="Kokubo H."/>
            <person name="Miyagawa-Tomita S."/>
            <person name="Tomimatsu H."/>
            <person name="Nakashima Y."/>
            <person name="Nakazawa M."/>
            <person name="Saga Y."/>
            <person name="Johnson R.L."/>
        </authorList>
    </citation>
    <scope>FUNCTION</scope>
    <scope>DISRUPTION PHENOTYPE</scope>
</reference>
<reference key="20">
    <citation type="journal article" date="2004" name="Genes Dev.">
        <title>The Notch target genes Hey1 and Hey2 are required for embryonic vascular development.</title>
        <authorList>
            <person name="Fischer A."/>
            <person name="Schumacher N."/>
            <person name="Maier M."/>
            <person name="Sendtner M."/>
            <person name="Gessler M."/>
        </authorList>
    </citation>
    <scope>FUNCTION</scope>
</reference>
<reference key="21">
    <citation type="journal article" date="2004" name="J. Biol. Chem.">
        <title>Hairy-related transcription factors inhibit GATA-dependent cardiac gene expression through a signal-responsive mechanism.</title>
        <authorList>
            <person name="Kathiriya I.S."/>
            <person name="King I.N."/>
            <person name="Murakami M."/>
            <person name="Nakagawa M."/>
            <person name="Astle J.M."/>
            <person name="Gardner K.A."/>
            <person name="Gerard R.D."/>
            <person name="Olson E.N."/>
            <person name="Srivastava D."/>
            <person name="Nakagawa O."/>
        </authorList>
    </citation>
    <scope>FUNCTION</scope>
    <scope>INTERACTION WITH GATA4</scope>
    <scope>MUTAGENESIS OF 33-SER--SER-37</scope>
</reference>
<reference key="22">
    <citation type="journal article" date="2005" name="Dev. Biol.">
        <title>Mouse hesr1 and hesr2 genes are redundantly required to mediate Notch signaling in the developing cardiovascular system.</title>
        <authorList>
            <person name="Kokubo H."/>
            <person name="Miyagawa-Tomita S."/>
            <person name="Nakazawa M."/>
            <person name="Saga Y."/>
            <person name="Johnson R.L."/>
        </authorList>
    </citation>
    <scope>FUNCTION</scope>
</reference>
<reference key="23">
    <citation type="journal article" date="2005" name="Mol. Cell. Biol.">
        <title>Hey basic helix-loop-helix transcription factors are repressors of GATA4 and GATA6 and restrict expression of the GATA target gene ANF in fetal hearts.</title>
        <authorList>
            <person name="Fischer A."/>
            <person name="Klattig J."/>
            <person name="Kneitz B."/>
            <person name="Diez H."/>
            <person name="Maier M."/>
            <person name="Holtmann B."/>
            <person name="Englert C."/>
            <person name="Gessler M."/>
        </authorList>
    </citation>
    <scope>FUNCTION</scope>
    <scope>INTERACTION WITH GATA4 AND GATA6</scope>
    <scope>DEVELOPMENTAL STAGE</scope>
    <scope>DISRUPTION PHENOTYPE</scope>
</reference>
<reference key="24">
    <citation type="journal article" date="2007" name="Circ. Res.">
        <title>CHF1/Hey2 plays a pivotal role in left ventricular maturation through suppression of ectopic atrial gene expression.</title>
        <authorList>
            <person name="Koibuchi N."/>
            <person name="Chin M.T."/>
        </authorList>
    </citation>
    <scope>FUNCTION</scope>
    <scope>DEVELOPMENTAL STAGE</scope>
    <scope>DISRUPTION PHENOTYPE</scope>
</reference>
<reference key="25">
    <citation type="journal article" date="2007" name="Circ. Res.">
        <title>Combined loss of Hey1 and HeyL causes congenital heart defects because of impaired epithelial to mesenchymal transition.</title>
        <authorList>
            <person name="Fischer A."/>
            <person name="Steidl C."/>
            <person name="Wagner T.U."/>
            <person name="Lang E."/>
            <person name="Jakob P.M."/>
            <person name="Friedl P."/>
            <person name="Knobeloch K.-P."/>
            <person name="Gessler M."/>
        </authorList>
    </citation>
    <scope>FUNCTION</scope>
    <scope>INTERACTION WITH HEYL</scope>
    <scope>DEVELOPMENTAL STAGE</scope>
    <scope>DISRUPTION PHENOTYPE</scope>
</reference>
<reference key="26">
    <citation type="journal article" date="2007" name="Development">
        <title>Hesr1 and Hesr2 regulate atrioventricular boundary formation in the developing heart through the repression of Tbx2.</title>
        <authorList>
            <person name="Kokubo H."/>
            <person name="Tomita-Miyagawa S."/>
            <person name="Hamada Y."/>
            <person name="Saga Y."/>
        </authorList>
    </citation>
    <scope>FUNCTION</scope>
    <scope>DEVELOPMENTAL STAGE</scope>
</reference>
<feature type="chain" id="PRO_0000245516" description="Hairy/enhancer-of-split related with YRPW motif protein 2">
    <location>
        <begin position="1"/>
        <end position="339"/>
    </location>
</feature>
<feature type="domain" description="bHLH" evidence="3">
    <location>
        <begin position="48"/>
        <end position="103"/>
    </location>
</feature>
<feature type="domain" description="Orange" evidence="2">
    <location>
        <begin position="122"/>
        <end position="157"/>
    </location>
</feature>
<feature type="region of interest" description="Disordered" evidence="4">
    <location>
        <begin position="1"/>
        <end position="52"/>
    </location>
</feature>
<feature type="region of interest" description="Transcriptional repression and interaction with NCOR1 and SIN3A" evidence="12">
    <location>
        <begin position="47"/>
        <end position="116"/>
    </location>
</feature>
<feature type="region of interest" description="Disordered" evidence="4">
    <location>
        <begin position="310"/>
        <end position="339"/>
    </location>
</feature>
<feature type="short sequence motif" description="YQPW motif">
    <location>
        <begin position="329"/>
        <end position="332"/>
    </location>
</feature>
<feature type="compositionally biased region" description="Acidic residues" evidence="4">
    <location>
        <begin position="8"/>
        <end position="18"/>
    </location>
</feature>
<feature type="compositionally biased region" description="Polar residues" evidence="4">
    <location>
        <begin position="22"/>
        <end position="46"/>
    </location>
</feature>
<feature type="compositionally biased region" description="Polar residues" evidence="4">
    <location>
        <begin position="318"/>
        <end position="328"/>
    </location>
</feature>
<feature type="mutagenesis site" description="Abrogates interaction with GATA4 and repression of GATA4-mediated transcription." evidence="21">
    <location>
        <begin position="33"/>
        <end position="37"/>
    </location>
</feature>
<feature type="mutagenesis site" description="Abrogates DNA-binding and transcriptional repression." evidence="10">
    <original>RKKRRGIIEKRRR</original>
    <variation>LE</variation>
    <location>
        <begin position="49"/>
        <end position="61"/>
    </location>
</feature>
<feature type="sequence conflict" description="In Ref. 6; BAC27428." evidence="27" ref="6">
    <original>E</original>
    <variation>K</variation>
    <location>
        <position position="7"/>
    </location>
</feature>
<feature type="sequence conflict" description="In Ref. 6; BAE34310." evidence="27" ref="6">
    <original>G</original>
    <variation>E</variation>
    <location>
        <position position="284"/>
    </location>
</feature>
<dbReference type="EMBL" id="AF172287">
    <property type="protein sequence ID" value="AAF14546.1"/>
    <property type="molecule type" value="mRNA"/>
</dbReference>
<dbReference type="EMBL" id="AJ271867">
    <property type="protein sequence ID" value="CAB71346.1"/>
    <property type="molecule type" value="mRNA"/>
</dbReference>
<dbReference type="EMBL" id="AF173902">
    <property type="protein sequence ID" value="AAF20174.1"/>
    <property type="molecule type" value="mRNA"/>
</dbReference>
<dbReference type="EMBL" id="AF232240">
    <property type="protein sequence ID" value="AAF37298.1"/>
    <property type="molecule type" value="mRNA"/>
</dbReference>
<dbReference type="EMBL" id="AB093589">
    <property type="protein sequence ID" value="BAC55066.1"/>
    <property type="molecule type" value="mRNA"/>
</dbReference>
<dbReference type="EMBL" id="AK031506">
    <property type="protein sequence ID" value="BAC27428.1"/>
    <property type="molecule type" value="mRNA"/>
</dbReference>
<dbReference type="EMBL" id="AK158000">
    <property type="protein sequence ID" value="BAE34310.1"/>
    <property type="molecule type" value="mRNA"/>
</dbReference>
<dbReference type="EMBL" id="BC103575">
    <property type="protein sequence ID" value="AAI03576.1"/>
    <property type="molecule type" value="mRNA"/>
</dbReference>
<dbReference type="EMBL" id="BC103576">
    <property type="protein sequence ID" value="AAI03577.1"/>
    <property type="molecule type" value="mRNA"/>
</dbReference>
<dbReference type="CCDS" id="CCDS23766.1"/>
<dbReference type="RefSeq" id="NP_038932.1">
    <property type="nucleotide sequence ID" value="NM_013904.1"/>
</dbReference>
<dbReference type="SMR" id="Q9QUS4"/>
<dbReference type="BioGRID" id="200283">
    <property type="interactions" value="1"/>
</dbReference>
<dbReference type="FunCoup" id="Q9QUS4">
    <property type="interactions" value="769"/>
</dbReference>
<dbReference type="IntAct" id="Q9QUS4">
    <property type="interactions" value="2"/>
</dbReference>
<dbReference type="STRING" id="10090.ENSMUSP00000019924"/>
<dbReference type="PhosphoSitePlus" id="Q9QUS4"/>
<dbReference type="PaxDb" id="10090-ENSMUSP00000019924"/>
<dbReference type="Antibodypedia" id="32702">
    <property type="antibodies" value="227 antibodies from 33 providers"/>
</dbReference>
<dbReference type="DNASU" id="15214"/>
<dbReference type="Ensembl" id="ENSMUST00000019924.9">
    <property type="protein sequence ID" value="ENSMUSP00000019924.9"/>
    <property type="gene ID" value="ENSMUSG00000019789.10"/>
</dbReference>
<dbReference type="GeneID" id="15214"/>
<dbReference type="KEGG" id="mmu:15214"/>
<dbReference type="UCSC" id="uc007etp.1">
    <property type="organism name" value="mouse"/>
</dbReference>
<dbReference type="AGR" id="MGI:1341884"/>
<dbReference type="CTD" id="23493"/>
<dbReference type="MGI" id="MGI:1341884">
    <property type="gene designation" value="Hey2"/>
</dbReference>
<dbReference type="VEuPathDB" id="HostDB:ENSMUSG00000019789"/>
<dbReference type="eggNOG" id="KOG4304">
    <property type="taxonomic scope" value="Eukaryota"/>
</dbReference>
<dbReference type="GeneTree" id="ENSGT00940000160636"/>
<dbReference type="HOGENOM" id="CLU_048294_1_0_1"/>
<dbReference type="InParanoid" id="Q9QUS4"/>
<dbReference type="OMA" id="DTTPCRL"/>
<dbReference type="OrthoDB" id="6371181at2759"/>
<dbReference type="PhylomeDB" id="Q9QUS4"/>
<dbReference type="TreeFam" id="TF323617"/>
<dbReference type="BioGRID-ORCS" id="15214">
    <property type="hits" value="0 hits in 79 CRISPR screens"/>
</dbReference>
<dbReference type="PRO" id="PR:Q9QUS4"/>
<dbReference type="Proteomes" id="UP000000589">
    <property type="component" value="Chromosome 10"/>
</dbReference>
<dbReference type="RNAct" id="Q9QUS4">
    <property type="molecule type" value="protein"/>
</dbReference>
<dbReference type="Bgee" id="ENSMUSG00000019789">
    <property type="expression patterns" value="Expressed in trigeminal ganglion and 254 other cell types or tissues"/>
</dbReference>
<dbReference type="ExpressionAtlas" id="Q9QUS4">
    <property type="expression patterns" value="baseline and differential"/>
</dbReference>
<dbReference type="GO" id="GO:0005737">
    <property type="term" value="C:cytoplasm"/>
    <property type="evidence" value="ECO:0000314"/>
    <property type="project" value="UniProtKB"/>
</dbReference>
<dbReference type="GO" id="GO:0005654">
    <property type="term" value="C:nucleoplasm"/>
    <property type="evidence" value="ECO:0000304"/>
    <property type="project" value="Reactome"/>
</dbReference>
<dbReference type="GO" id="GO:0005634">
    <property type="term" value="C:nucleus"/>
    <property type="evidence" value="ECO:0000314"/>
    <property type="project" value="UniProtKB"/>
</dbReference>
<dbReference type="GO" id="GO:0005667">
    <property type="term" value="C:transcription regulator complex"/>
    <property type="evidence" value="ECO:0000250"/>
    <property type="project" value="MGI"/>
</dbReference>
<dbReference type="GO" id="GO:0017053">
    <property type="term" value="C:transcription repressor complex"/>
    <property type="evidence" value="ECO:0007669"/>
    <property type="project" value="Ensembl"/>
</dbReference>
<dbReference type="GO" id="GO:0000987">
    <property type="term" value="F:cis-regulatory region sequence-specific DNA binding"/>
    <property type="evidence" value="ECO:0000314"/>
    <property type="project" value="BHF-UCL"/>
</dbReference>
<dbReference type="GO" id="GO:0003677">
    <property type="term" value="F:DNA binding"/>
    <property type="evidence" value="ECO:0000315"/>
    <property type="project" value="UniProtKB"/>
</dbReference>
<dbReference type="GO" id="GO:0003700">
    <property type="term" value="F:DNA-binding transcription factor activity"/>
    <property type="evidence" value="ECO:0000314"/>
    <property type="project" value="UniProtKB"/>
</dbReference>
<dbReference type="GO" id="GO:0001227">
    <property type="term" value="F:DNA-binding transcription repressor activity, RNA polymerase II-specific"/>
    <property type="evidence" value="ECO:0000314"/>
    <property type="project" value="UniProtKB"/>
</dbReference>
<dbReference type="GO" id="GO:0042826">
    <property type="term" value="F:histone deacetylase binding"/>
    <property type="evidence" value="ECO:0007669"/>
    <property type="project" value="Ensembl"/>
</dbReference>
<dbReference type="GO" id="GO:0042802">
    <property type="term" value="F:identical protein binding"/>
    <property type="evidence" value="ECO:0000353"/>
    <property type="project" value="MGI"/>
</dbReference>
<dbReference type="GO" id="GO:0046983">
    <property type="term" value="F:protein dimerization activity"/>
    <property type="evidence" value="ECO:0007669"/>
    <property type="project" value="InterPro"/>
</dbReference>
<dbReference type="GO" id="GO:0061629">
    <property type="term" value="F:RNA polymerase II-specific DNA-binding transcription factor binding"/>
    <property type="evidence" value="ECO:0007669"/>
    <property type="project" value="Ensembl"/>
</dbReference>
<dbReference type="GO" id="GO:0043565">
    <property type="term" value="F:sequence-specific DNA binding"/>
    <property type="evidence" value="ECO:0000314"/>
    <property type="project" value="MGI"/>
</dbReference>
<dbReference type="GO" id="GO:0009948">
    <property type="term" value="P:anterior/posterior axis specification"/>
    <property type="evidence" value="ECO:0000316"/>
    <property type="project" value="MGI"/>
</dbReference>
<dbReference type="GO" id="GO:0003180">
    <property type="term" value="P:aortic valve morphogenesis"/>
    <property type="evidence" value="ECO:0000314"/>
    <property type="project" value="BHF-UCL"/>
</dbReference>
<dbReference type="GO" id="GO:0060842">
    <property type="term" value="P:arterial endothelial cell differentiation"/>
    <property type="evidence" value="ECO:0000316"/>
    <property type="project" value="BHF-UCL"/>
</dbReference>
<dbReference type="GO" id="GO:0060840">
    <property type="term" value="P:artery development"/>
    <property type="evidence" value="ECO:0000316"/>
    <property type="project" value="MGI"/>
</dbReference>
<dbReference type="GO" id="GO:0035910">
    <property type="term" value="P:ascending aorta morphogenesis"/>
    <property type="evidence" value="ECO:0000315"/>
    <property type="project" value="BHF-UCL"/>
</dbReference>
<dbReference type="GO" id="GO:0060413">
    <property type="term" value="P:atrial septum morphogenesis"/>
    <property type="evidence" value="ECO:0000315"/>
    <property type="project" value="BHF-UCL"/>
</dbReference>
<dbReference type="GO" id="GO:0003171">
    <property type="term" value="P:atrioventricular valve development"/>
    <property type="evidence" value="ECO:0000315"/>
    <property type="project" value="MGI"/>
</dbReference>
<dbReference type="GO" id="GO:0001568">
    <property type="term" value="P:blood vessel development"/>
    <property type="evidence" value="ECO:0000316"/>
    <property type="project" value="MGI"/>
</dbReference>
<dbReference type="GO" id="GO:0060837">
    <property type="term" value="P:blood vessel endothelial cell differentiation"/>
    <property type="evidence" value="ECO:0000316"/>
    <property type="project" value="MGI"/>
</dbReference>
<dbReference type="GO" id="GO:0060317">
    <property type="term" value="P:cardiac epithelial to mesenchymal transition"/>
    <property type="evidence" value="ECO:0000315"/>
    <property type="project" value="BHF-UCL"/>
</dbReference>
<dbReference type="GO" id="GO:0003214">
    <property type="term" value="P:cardiac left ventricle morphogenesis"/>
    <property type="evidence" value="ECO:0000315"/>
    <property type="project" value="BHF-UCL"/>
</dbReference>
<dbReference type="GO" id="GO:0010659">
    <property type="term" value="P:cardiac muscle cell apoptotic process"/>
    <property type="evidence" value="ECO:0000315"/>
    <property type="project" value="MGI"/>
</dbReference>
<dbReference type="GO" id="GO:0060038">
    <property type="term" value="P:cardiac muscle cell proliferation"/>
    <property type="evidence" value="ECO:0000315"/>
    <property type="project" value="MGI"/>
</dbReference>
<dbReference type="GO" id="GO:0003300">
    <property type="term" value="P:cardiac muscle hypertrophy"/>
    <property type="evidence" value="ECO:0000315"/>
    <property type="project" value="MGI"/>
</dbReference>
<dbReference type="GO" id="GO:0014898">
    <property type="term" value="P:cardiac muscle hypertrophy in response to stress"/>
    <property type="evidence" value="ECO:0000314"/>
    <property type="project" value="MGI"/>
</dbReference>
<dbReference type="GO" id="GO:0003215">
    <property type="term" value="P:cardiac right ventricle morphogenesis"/>
    <property type="evidence" value="ECO:0000315"/>
    <property type="project" value="BHF-UCL"/>
</dbReference>
<dbReference type="GO" id="GO:0060411">
    <property type="term" value="P:cardiac septum morphogenesis"/>
    <property type="evidence" value="ECO:0000315"/>
    <property type="project" value="BHF-UCL"/>
</dbReference>
<dbReference type="GO" id="GO:0060948">
    <property type="term" value="P:cardiac vascular smooth muscle cell development"/>
    <property type="evidence" value="ECO:0000315"/>
    <property type="project" value="MGI"/>
</dbReference>
<dbReference type="GO" id="GO:0003208">
    <property type="term" value="P:cardiac ventricle morphogenesis"/>
    <property type="evidence" value="ECO:0000315"/>
    <property type="project" value="UniProtKB"/>
</dbReference>
<dbReference type="GO" id="GO:0045165">
    <property type="term" value="P:cell fate commitment"/>
    <property type="evidence" value="ECO:0000315"/>
    <property type="project" value="MGI"/>
</dbReference>
<dbReference type="GO" id="GO:0090102">
    <property type="term" value="P:cochlea development"/>
    <property type="evidence" value="ECO:0000315"/>
    <property type="project" value="MGI"/>
</dbReference>
<dbReference type="GO" id="GO:0060977">
    <property type="term" value="P:coronary vasculature morphogenesis"/>
    <property type="evidence" value="ECO:0000315"/>
    <property type="project" value="MGI"/>
</dbReference>
<dbReference type="GO" id="GO:0035912">
    <property type="term" value="P:dorsal aorta morphogenesis"/>
    <property type="evidence" value="ECO:0000316"/>
    <property type="project" value="BHF-UCL"/>
</dbReference>
<dbReference type="GO" id="GO:0003199">
    <property type="term" value="P:endocardial cushion to mesenchymal transition involved in heart valve formation"/>
    <property type="evidence" value="ECO:0000316"/>
    <property type="project" value="MGI"/>
</dbReference>
<dbReference type="GO" id="GO:0060347">
    <property type="term" value="P:heart trabecula formation"/>
    <property type="evidence" value="ECO:0000315"/>
    <property type="project" value="BHF-UCL"/>
</dbReference>
<dbReference type="GO" id="GO:0060716">
    <property type="term" value="P:labyrinthine layer blood vessel development"/>
    <property type="evidence" value="ECO:0000316"/>
    <property type="project" value="BHF-UCL"/>
</dbReference>
<dbReference type="GO" id="GO:0014031">
    <property type="term" value="P:mesenchymal cell development"/>
    <property type="evidence" value="ECO:0000315"/>
    <property type="project" value="BHF-UCL"/>
</dbReference>
<dbReference type="GO" id="GO:0003150">
    <property type="term" value="P:muscular septum morphogenesis"/>
    <property type="evidence" value="ECO:0000315"/>
    <property type="project" value="BHF-UCL"/>
</dbReference>
<dbReference type="GO" id="GO:0070168">
    <property type="term" value="P:negative regulation of biomineral tissue development"/>
    <property type="evidence" value="ECO:0000314"/>
    <property type="project" value="BHF-UCL"/>
</dbReference>
<dbReference type="GO" id="GO:0010667">
    <property type="term" value="P:negative regulation of cardiac muscle cell apoptotic process"/>
    <property type="evidence" value="ECO:0000315"/>
    <property type="project" value="MGI"/>
</dbReference>
<dbReference type="GO" id="GO:2000723">
    <property type="term" value="P:negative regulation of cardiac vascular smooth muscle cell differentiation"/>
    <property type="evidence" value="ECO:0007669"/>
    <property type="project" value="Ensembl"/>
</dbReference>
<dbReference type="GO" id="GO:0045892">
    <property type="term" value="P:negative regulation of DNA-templated transcription"/>
    <property type="evidence" value="ECO:0000314"/>
    <property type="project" value="UniProtKB"/>
</dbReference>
<dbReference type="GO" id="GO:0010629">
    <property type="term" value="P:negative regulation of gene expression"/>
    <property type="evidence" value="ECO:0000315"/>
    <property type="project" value="BHF-UCL"/>
</dbReference>
<dbReference type="GO" id="GO:0045746">
    <property type="term" value="P:negative regulation of Notch signaling pathway"/>
    <property type="evidence" value="ECO:0000314"/>
    <property type="project" value="BHF-UCL"/>
</dbReference>
<dbReference type="GO" id="GO:0051151">
    <property type="term" value="P:negative regulation of smooth muscle cell differentiation"/>
    <property type="evidence" value="ECO:0000314"/>
    <property type="project" value="BHF-UCL"/>
</dbReference>
<dbReference type="GO" id="GO:0000122">
    <property type="term" value="P:negative regulation of transcription by RNA polymerase II"/>
    <property type="evidence" value="ECO:0000314"/>
    <property type="project" value="UniProtKB"/>
</dbReference>
<dbReference type="GO" id="GO:0060633">
    <property type="term" value="P:negative regulation of transcription initiation by RNA polymerase II"/>
    <property type="evidence" value="ECO:0007669"/>
    <property type="project" value="Ensembl"/>
</dbReference>
<dbReference type="GO" id="GO:0007219">
    <property type="term" value="P:Notch signaling pathway"/>
    <property type="evidence" value="ECO:0000314"/>
    <property type="project" value="UniProtKB"/>
</dbReference>
<dbReference type="GO" id="GO:0003151">
    <property type="term" value="P:outflow tract morphogenesis"/>
    <property type="evidence" value="ECO:0000315"/>
    <property type="project" value="BHF-UCL"/>
</dbReference>
<dbReference type="GO" id="GO:0007389">
    <property type="term" value="P:pattern specification process"/>
    <property type="evidence" value="ECO:0000315"/>
    <property type="project" value="MGI"/>
</dbReference>
<dbReference type="GO" id="GO:0060045">
    <property type="term" value="P:positive regulation of cardiac muscle cell proliferation"/>
    <property type="evidence" value="ECO:0000315"/>
    <property type="project" value="MGI"/>
</dbReference>
<dbReference type="GO" id="GO:0010460">
    <property type="term" value="P:positive regulation of heart rate"/>
    <property type="evidence" value="ECO:0000315"/>
    <property type="project" value="MGI"/>
</dbReference>
<dbReference type="GO" id="GO:0045944">
    <property type="term" value="P:positive regulation of transcription by RNA polymerase II"/>
    <property type="evidence" value="ECO:0000315"/>
    <property type="project" value="BHF-UCL"/>
</dbReference>
<dbReference type="GO" id="GO:0065004">
    <property type="term" value="P:protein-DNA complex assembly"/>
    <property type="evidence" value="ECO:0000314"/>
    <property type="project" value="MGI"/>
</dbReference>
<dbReference type="GO" id="GO:0061156">
    <property type="term" value="P:pulmonary artery morphogenesis"/>
    <property type="evidence" value="ECO:0000315"/>
    <property type="project" value="BHF-UCL"/>
</dbReference>
<dbReference type="GO" id="GO:0003184">
    <property type="term" value="P:pulmonary valve morphogenesis"/>
    <property type="evidence" value="ECO:0000315"/>
    <property type="project" value="BHF-UCL"/>
</dbReference>
<dbReference type="GO" id="GO:0010468">
    <property type="term" value="P:regulation of gene expression"/>
    <property type="evidence" value="ECO:0000315"/>
    <property type="project" value="MGI"/>
</dbReference>
<dbReference type="GO" id="GO:0045607">
    <property type="term" value="P:regulation of inner ear auditory receptor cell differentiation"/>
    <property type="evidence" value="ECO:0000316"/>
    <property type="project" value="MGI"/>
</dbReference>
<dbReference type="GO" id="GO:0006357">
    <property type="term" value="P:regulation of transcription by RNA polymerase II"/>
    <property type="evidence" value="ECO:0000250"/>
    <property type="project" value="MGI"/>
</dbReference>
<dbReference type="GO" id="GO:2001212">
    <property type="term" value="P:regulation of vasculogenesis"/>
    <property type="evidence" value="ECO:0000316"/>
    <property type="project" value="BHF-UCL"/>
</dbReference>
<dbReference type="GO" id="GO:0003195">
    <property type="term" value="P:tricuspid valve formation"/>
    <property type="evidence" value="ECO:0000315"/>
    <property type="project" value="MGI"/>
</dbReference>
<dbReference type="GO" id="GO:0003186">
    <property type="term" value="P:tricuspid valve morphogenesis"/>
    <property type="evidence" value="ECO:0000315"/>
    <property type="project" value="BHF-UCL"/>
</dbReference>
<dbReference type="GO" id="GO:0036304">
    <property type="term" value="P:umbilical cord morphogenesis"/>
    <property type="evidence" value="ECO:0000316"/>
    <property type="project" value="BHF-UCL"/>
</dbReference>
<dbReference type="GO" id="GO:0001570">
    <property type="term" value="P:vasculogenesis"/>
    <property type="evidence" value="ECO:0000316"/>
    <property type="project" value="MGI"/>
</dbReference>
<dbReference type="GO" id="GO:0055015">
    <property type="term" value="P:ventricular cardiac muscle cell development"/>
    <property type="evidence" value="ECO:0000315"/>
    <property type="project" value="BHF-UCL"/>
</dbReference>
<dbReference type="GO" id="GO:0060412">
    <property type="term" value="P:ventricular septum morphogenesis"/>
    <property type="evidence" value="ECO:0000315"/>
    <property type="project" value="BHF-UCL"/>
</dbReference>
<dbReference type="GO" id="GO:0003222">
    <property type="term" value="P:ventricular trabecula myocardium morphogenesis"/>
    <property type="evidence" value="ECO:0000316"/>
    <property type="project" value="MGI"/>
</dbReference>
<dbReference type="CDD" id="cd18920">
    <property type="entry name" value="bHLH-O_HEY2"/>
    <property type="match status" value="1"/>
</dbReference>
<dbReference type="FunFam" id="4.10.280.10:FF:000012">
    <property type="entry name" value="hairy/enhancer-of-split related with YRPW motif protein 1"/>
    <property type="match status" value="1"/>
</dbReference>
<dbReference type="Gene3D" id="6.10.250.980">
    <property type="match status" value="1"/>
</dbReference>
<dbReference type="Gene3D" id="4.10.280.10">
    <property type="entry name" value="Helix-loop-helix DNA-binding domain"/>
    <property type="match status" value="1"/>
</dbReference>
<dbReference type="InterPro" id="IPR011598">
    <property type="entry name" value="bHLH_dom"/>
</dbReference>
<dbReference type="InterPro" id="IPR050370">
    <property type="entry name" value="HES_HEY"/>
</dbReference>
<dbReference type="InterPro" id="IPR036638">
    <property type="entry name" value="HLH_DNA-bd_sf"/>
</dbReference>
<dbReference type="InterPro" id="IPR003650">
    <property type="entry name" value="Orange_dom"/>
</dbReference>
<dbReference type="PANTHER" id="PTHR10985">
    <property type="entry name" value="BASIC HELIX-LOOP-HELIX TRANSCRIPTION FACTOR, HES-RELATED"/>
    <property type="match status" value="1"/>
</dbReference>
<dbReference type="Pfam" id="PF07527">
    <property type="entry name" value="Hairy_orange"/>
    <property type="match status" value="1"/>
</dbReference>
<dbReference type="Pfam" id="PF00010">
    <property type="entry name" value="HLH"/>
    <property type="match status" value="1"/>
</dbReference>
<dbReference type="SMART" id="SM00353">
    <property type="entry name" value="HLH"/>
    <property type="match status" value="1"/>
</dbReference>
<dbReference type="SMART" id="SM00511">
    <property type="entry name" value="ORANGE"/>
    <property type="match status" value="1"/>
</dbReference>
<dbReference type="SUPFAM" id="SSF47459">
    <property type="entry name" value="HLH, helix-loop-helix DNA-binding domain"/>
    <property type="match status" value="1"/>
</dbReference>
<dbReference type="SUPFAM" id="SSF158457">
    <property type="entry name" value="Orange domain-like"/>
    <property type="match status" value="1"/>
</dbReference>
<dbReference type="PROSITE" id="PS50888">
    <property type="entry name" value="BHLH"/>
    <property type="match status" value="1"/>
</dbReference>
<dbReference type="PROSITE" id="PS51054">
    <property type="entry name" value="ORANGE"/>
    <property type="match status" value="1"/>
</dbReference>
<organism>
    <name type="scientific">Mus musculus</name>
    <name type="common">Mouse</name>
    <dbReference type="NCBI Taxonomy" id="10090"/>
    <lineage>
        <taxon>Eukaryota</taxon>
        <taxon>Metazoa</taxon>
        <taxon>Chordata</taxon>
        <taxon>Craniata</taxon>
        <taxon>Vertebrata</taxon>
        <taxon>Euteleostomi</taxon>
        <taxon>Mammalia</taxon>
        <taxon>Eutheria</taxon>
        <taxon>Euarchontoglires</taxon>
        <taxon>Glires</taxon>
        <taxon>Rodentia</taxon>
        <taxon>Myomorpha</taxon>
        <taxon>Muroidea</taxon>
        <taxon>Muridae</taxon>
        <taxon>Murinae</taxon>
        <taxon>Mus</taxon>
        <taxon>Mus</taxon>
    </lineage>
</organism>
<evidence type="ECO:0000250" key="1"/>
<evidence type="ECO:0000255" key="2">
    <source>
        <dbReference type="PROSITE-ProRule" id="PRU00380"/>
    </source>
</evidence>
<evidence type="ECO:0000255" key="3">
    <source>
        <dbReference type="PROSITE-ProRule" id="PRU00981"/>
    </source>
</evidence>
<evidence type="ECO:0000256" key="4">
    <source>
        <dbReference type="SAM" id="MobiDB-lite"/>
    </source>
</evidence>
<evidence type="ECO:0000269" key="5">
    <source>
    </source>
</evidence>
<evidence type="ECO:0000269" key="6">
    <source>
    </source>
</evidence>
<evidence type="ECO:0000269" key="7">
    <source>
    </source>
</evidence>
<evidence type="ECO:0000269" key="8">
    <source>
    </source>
</evidence>
<evidence type="ECO:0000269" key="9">
    <source>
    </source>
</evidence>
<evidence type="ECO:0000269" key="10">
    <source>
    </source>
</evidence>
<evidence type="ECO:0000269" key="11">
    <source>
    </source>
</evidence>
<evidence type="ECO:0000269" key="12">
    <source>
    </source>
</evidence>
<evidence type="ECO:0000269" key="13">
    <source>
    </source>
</evidence>
<evidence type="ECO:0000269" key="14">
    <source>
    </source>
</evidence>
<evidence type="ECO:0000269" key="15">
    <source>
    </source>
</evidence>
<evidence type="ECO:0000269" key="16">
    <source>
    </source>
</evidence>
<evidence type="ECO:0000269" key="17">
    <source>
    </source>
</evidence>
<evidence type="ECO:0000269" key="18">
    <source>
    </source>
</evidence>
<evidence type="ECO:0000269" key="19">
    <source>
    </source>
</evidence>
<evidence type="ECO:0000269" key="20">
    <source>
    </source>
</evidence>
<evidence type="ECO:0000269" key="21">
    <source>
    </source>
</evidence>
<evidence type="ECO:0000269" key="22">
    <source>
    </source>
</evidence>
<evidence type="ECO:0000269" key="23">
    <source>
    </source>
</evidence>
<evidence type="ECO:0000269" key="24">
    <source>
    </source>
</evidence>
<evidence type="ECO:0000269" key="25">
    <source>
    </source>
</evidence>
<evidence type="ECO:0000269" key="26">
    <source>
    </source>
</evidence>
<evidence type="ECO:0000305" key="27"/>
<keyword id="KW-0217">Developmental protein</keyword>
<keyword id="KW-0238">DNA-binding</keyword>
<keyword id="KW-0914">Notch signaling pathway</keyword>
<keyword id="KW-0539">Nucleus</keyword>
<keyword id="KW-1185">Reference proteome</keyword>
<keyword id="KW-0678">Repressor</keyword>
<keyword id="KW-0804">Transcription</keyword>
<keyword id="KW-0805">Transcription regulation</keyword>
<gene>
    <name type="primary">Hey2</name>
    <name type="synonym">Chf1</name>
    <name type="synonym">Herp</name>
    <name type="synonym">Herp1</name>
    <name type="synonym">Hesr2</name>
    <name type="synonym">Hrt2</name>
</gene>
<protein>
    <recommendedName>
        <fullName>Hairy/enhancer-of-split related with YRPW motif protein 2</fullName>
    </recommendedName>
    <alternativeName>
        <fullName>HES-related repressor protein 2</fullName>
    </alternativeName>
    <alternativeName>
        <fullName>Hairy and enhancer of split-related protein 2</fullName>
        <shortName>HESR-2</shortName>
    </alternativeName>
    <alternativeName>
        <fullName>Hairy-related transcription factor 2</fullName>
        <shortName>HRT-2</shortName>
        <shortName>mHRT2</shortName>
    </alternativeName>
    <alternativeName>
        <fullName>Protein gridlock homolog</fullName>
    </alternativeName>
</protein>
<name>HEY2_MOUSE</name>
<sequence length="339" mass="35873">MKRPCEETTSESDLDETIDVGSENNYPGHATSSVMRSNSPTTTSQIMARKKRRGIIEKRRRDRINNSLSELRRLVPTAFEKQGSAKLEKAEILQMTVDHLKMLQATGGKGYFDAHALATDFMSIGFRECLTEVARYLSSVEGLDPSDPLRVRLVSHLSTCASQREAAVMTSSMAHHHHPLHPHHWAAAFHHLPTALLQPNGLHTSESTPCRLSTSSEVPSAHGSALLTATFAHADSALRMPSGGTVAPCVPPLSTSLLSLSATVHAAAAAATAAAHSFPLSFAGAFPMLPSNAAAAAAVAAATAISPPLSVSAASSPQQTSTGTNNKPYQPWGTEVGAF</sequence>
<accession>Q9QUS4</accession>
<accession>Q3TZ99</accession>
<accession>Q8CD44</accession>
<proteinExistence type="evidence at protein level"/>
<comment type="function">
    <text evidence="7 10 11 12 14 15 16 17 18 19 20 21 22 23 24 25 26">Transcriptional repressor which functions as a downstream effector of Notch signaling in cardiovascular development. Specifically required for the Notch-induced endocardial epithelial to mesenchymal transition, which is itself criticial for cardiac valve and septum development. May be required in conjunction with HEY1 to specify arterial cell fate or identity. Promotes maintenance of neuronal precursor cells and glial versus neuronal fate specification. Binds preferentially to the canonical E box sequence 5'-CACGTG-3'. Represses transcription by the cardiac transcriptional activators GATA4 and GATA6 and by the neuronal bHLH factors ASCL1/MASH1 and NEUROD4/MATH3.</text>
</comment>
<comment type="subunit">
    <text evidence="1 12 21 23 25">May self-associate (By similarity). Interacts with ARNT (By similarity). Interacts with GATA4, GATA6, HES1 and HEYL. Interacts with HDAC1, NCOR1 and SIN3A.</text>
</comment>
<comment type="subcellular location">
    <subcellularLocation>
        <location evidence="2 3 13">Nucleus</location>
    </subcellularLocation>
</comment>
<comment type="tissue specificity">
    <text evidence="6 7 8 17">Highly expressed in the aorta, lower expression detected in the heart, brain, kidney, lung, muscle, ovary and testis.</text>
</comment>
<comment type="developmental stage">
    <text evidence="5 6 7 8 11 17 23 24 25 26">Expressed in the developing somites and the ventricles of the heart. Expressed in the otic vesicles between 8.5 dpc and 10.5 dpc. Expressed in the myocardium of the ventricles at 9.5 dpc and in the atrioventricular cushions from 9.5 to 12.5 dpc. At 10.5 dpc, strongly expressed in the spinal nerves, the cranial ganglia and the telencephalon. At 11.5 dpc, expressed in the craniofacial region of the distal part of the maxillary arch, along the rostral mandibular arch and surrounding the lateral nasal processes. Expressed in the midbrain-hindbrain boundary and the posterior edge of the hand- and foot-paddle. Expressed in the mediodorsal region of the telencephalon and the ventricular zone of the ventral spinal cord at 12 dpc, then in the ventral region of the telencephalon and the cortical plate at 15 dpc. Expression in the heart is limited to the compact myocardial layer at 17.5 dpc. Also expressed in the developing retina up to P5, at which point expression decreases.</text>
</comment>
<comment type="induction">
    <text evidence="9 10 13">By activation of the Notch signaling pathway.</text>
</comment>
<comment type="disruption phenotype">
    <text evidence="14 15 16 19 23 25 26">Mice display a spectrum of cardiac malformations including ventricular septal defects, tetralogy of Fallot and tricuspid atresia. The penetrance of the cardiac malformation phenotype varies according to the strain, suggesting the presence of modifier genes.</text>
</comment>
<comment type="similarity">
    <text evidence="27">Belongs to the HEY family.</text>
</comment>